<keyword id="KW-0067">ATP-binding</keyword>
<keyword id="KW-0436">Ligase</keyword>
<keyword id="KW-0547">Nucleotide-binding</keyword>
<keyword id="KW-0648">Protein biosynthesis</keyword>
<organism>
    <name type="scientific">Clostridium botulinum (strain Kyoto / Type A2)</name>
    <dbReference type="NCBI Taxonomy" id="536232"/>
    <lineage>
        <taxon>Bacteria</taxon>
        <taxon>Bacillati</taxon>
        <taxon>Bacillota</taxon>
        <taxon>Clostridia</taxon>
        <taxon>Eubacteriales</taxon>
        <taxon>Clostridiaceae</taxon>
        <taxon>Clostridium</taxon>
    </lineage>
</organism>
<sequence>MDFEAVIGLEVHAELSTNTKIYCGCTTEFGGQPNTHVCPICLGLPGSLPQLNKRVVEYGIKAGLALNCSINKVCRMDRKNYFYPDCPKNYQITQDEVPICRDGYIEIELENGEKKKIGIERIHMEEDAGKLLHTNAGTLVDYNRAGVPLIEIVSRPDIRTPEEATKYLEKLKSILSSIEVSDCKMEQGSLRCDGNISVMPKGSEKFGVRSEIKNMNSFKALEKALSYEYDRHVEAVTKGEILEQETRRWDEANSVTVLMRSKEKANDYRYFPEGDLVTLNISDEWIEEVRKTIPELPHEKAERFVNEFRIPKYDAMVLTLTMDMAKFFEETTLKSEDAKATSNWLMGDISRLMNEKTIEVKDLKFNPEQLAELIKLINAGTISNNIGKKVLDDMFKSGKSPKDIVEEKGLVQNNDEGAILEVVKKIIENNPQSIEDFKNGKKRALGFLVGLVMKETKGKANPQIVNKLVSEEANKM</sequence>
<accession>C1FLD8</accession>
<dbReference type="EC" id="6.3.5.-" evidence="1"/>
<dbReference type="EMBL" id="CP001581">
    <property type="protein sequence ID" value="ACO84934.1"/>
    <property type="molecule type" value="Genomic_DNA"/>
</dbReference>
<dbReference type="RefSeq" id="WP_003357442.1">
    <property type="nucleotide sequence ID" value="NC_012563.1"/>
</dbReference>
<dbReference type="SMR" id="C1FLD8"/>
<dbReference type="KEGG" id="cby:CLM_3699"/>
<dbReference type="eggNOG" id="COG0064">
    <property type="taxonomic scope" value="Bacteria"/>
</dbReference>
<dbReference type="HOGENOM" id="CLU_019240_0_0_9"/>
<dbReference type="Proteomes" id="UP000001374">
    <property type="component" value="Chromosome"/>
</dbReference>
<dbReference type="GO" id="GO:0050566">
    <property type="term" value="F:asparaginyl-tRNA synthase (glutamine-hydrolyzing) activity"/>
    <property type="evidence" value="ECO:0007669"/>
    <property type="project" value="RHEA"/>
</dbReference>
<dbReference type="GO" id="GO:0005524">
    <property type="term" value="F:ATP binding"/>
    <property type="evidence" value="ECO:0007669"/>
    <property type="project" value="UniProtKB-KW"/>
</dbReference>
<dbReference type="GO" id="GO:0050567">
    <property type="term" value="F:glutaminyl-tRNA synthase (glutamine-hydrolyzing) activity"/>
    <property type="evidence" value="ECO:0007669"/>
    <property type="project" value="UniProtKB-UniRule"/>
</dbReference>
<dbReference type="GO" id="GO:0070681">
    <property type="term" value="P:glutaminyl-tRNAGln biosynthesis via transamidation"/>
    <property type="evidence" value="ECO:0007669"/>
    <property type="project" value="TreeGrafter"/>
</dbReference>
<dbReference type="GO" id="GO:0006412">
    <property type="term" value="P:translation"/>
    <property type="evidence" value="ECO:0007669"/>
    <property type="project" value="UniProtKB-UniRule"/>
</dbReference>
<dbReference type="FunFam" id="1.10.10.410:FF:000001">
    <property type="entry name" value="Aspartyl/glutamyl-tRNA(Asn/Gln) amidotransferase subunit B"/>
    <property type="match status" value="1"/>
</dbReference>
<dbReference type="FunFam" id="1.10.150.380:FF:000001">
    <property type="entry name" value="Aspartyl/glutamyl-tRNA(Asn/Gln) amidotransferase subunit B"/>
    <property type="match status" value="1"/>
</dbReference>
<dbReference type="Gene3D" id="1.10.10.410">
    <property type="match status" value="1"/>
</dbReference>
<dbReference type="Gene3D" id="1.10.150.380">
    <property type="entry name" value="GatB domain, N-terminal subdomain"/>
    <property type="match status" value="1"/>
</dbReference>
<dbReference type="HAMAP" id="MF_00121">
    <property type="entry name" value="GatB"/>
    <property type="match status" value="1"/>
</dbReference>
<dbReference type="InterPro" id="IPR017959">
    <property type="entry name" value="Asn/Gln-tRNA_amidoTrfase_suB/E"/>
</dbReference>
<dbReference type="InterPro" id="IPR006075">
    <property type="entry name" value="Asn/Gln-tRNA_Trfase_suB/E_cat"/>
</dbReference>
<dbReference type="InterPro" id="IPR018027">
    <property type="entry name" value="Asn/Gln_amidotransferase"/>
</dbReference>
<dbReference type="InterPro" id="IPR003789">
    <property type="entry name" value="Asn/Gln_tRNA_amidoTrase-B-like"/>
</dbReference>
<dbReference type="InterPro" id="IPR004413">
    <property type="entry name" value="GatB"/>
</dbReference>
<dbReference type="InterPro" id="IPR042114">
    <property type="entry name" value="GatB_C_1"/>
</dbReference>
<dbReference type="InterPro" id="IPR023168">
    <property type="entry name" value="GatB_Yqey_C_2"/>
</dbReference>
<dbReference type="InterPro" id="IPR017958">
    <property type="entry name" value="Gln-tRNA_amidoTrfase_suB_CS"/>
</dbReference>
<dbReference type="InterPro" id="IPR014746">
    <property type="entry name" value="Gln_synth/guanido_kin_cat_dom"/>
</dbReference>
<dbReference type="NCBIfam" id="TIGR00133">
    <property type="entry name" value="gatB"/>
    <property type="match status" value="1"/>
</dbReference>
<dbReference type="NCBIfam" id="NF004012">
    <property type="entry name" value="PRK05477.1-2"/>
    <property type="match status" value="1"/>
</dbReference>
<dbReference type="NCBIfam" id="NF004014">
    <property type="entry name" value="PRK05477.1-4"/>
    <property type="match status" value="1"/>
</dbReference>
<dbReference type="PANTHER" id="PTHR11659">
    <property type="entry name" value="GLUTAMYL-TRNA GLN AMIDOTRANSFERASE SUBUNIT B MITOCHONDRIAL AND PROKARYOTIC PET112-RELATED"/>
    <property type="match status" value="1"/>
</dbReference>
<dbReference type="PANTHER" id="PTHR11659:SF0">
    <property type="entry name" value="GLUTAMYL-TRNA(GLN) AMIDOTRANSFERASE SUBUNIT B, MITOCHONDRIAL"/>
    <property type="match status" value="1"/>
</dbReference>
<dbReference type="Pfam" id="PF02934">
    <property type="entry name" value="GatB_N"/>
    <property type="match status" value="1"/>
</dbReference>
<dbReference type="Pfam" id="PF02637">
    <property type="entry name" value="GatB_Yqey"/>
    <property type="match status" value="1"/>
</dbReference>
<dbReference type="SMART" id="SM00845">
    <property type="entry name" value="GatB_Yqey"/>
    <property type="match status" value="1"/>
</dbReference>
<dbReference type="SUPFAM" id="SSF89095">
    <property type="entry name" value="GatB/YqeY motif"/>
    <property type="match status" value="1"/>
</dbReference>
<dbReference type="SUPFAM" id="SSF55931">
    <property type="entry name" value="Glutamine synthetase/guanido kinase"/>
    <property type="match status" value="1"/>
</dbReference>
<dbReference type="PROSITE" id="PS01234">
    <property type="entry name" value="GATB"/>
    <property type="match status" value="1"/>
</dbReference>
<reference key="1">
    <citation type="submission" date="2008-10" db="EMBL/GenBank/DDBJ databases">
        <title>Genome sequence of Clostridium botulinum A2 Kyoto.</title>
        <authorList>
            <person name="Shrivastava S."/>
            <person name="Brinkac L.M."/>
            <person name="Brown J.L."/>
            <person name="Bruce D."/>
            <person name="Detter C.C."/>
            <person name="Johnson E.A."/>
            <person name="Munk C.A."/>
            <person name="Smith L.A."/>
            <person name="Smith T.J."/>
            <person name="Sutton G."/>
            <person name="Brettin T.S."/>
        </authorList>
    </citation>
    <scope>NUCLEOTIDE SEQUENCE [LARGE SCALE GENOMIC DNA]</scope>
    <source>
        <strain>Kyoto / Type A2</strain>
    </source>
</reference>
<comment type="function">
    <text evidence="1">Allows the formation of correctly charged Asn-tRNA(Asn) or Gln-tRNA(Gln) through the transamidation of misacylated Asp-tRNA(Asn) or Glu-tRNA(Gln) in organisms which lack either or both of asparaginyl-tRNA or glutaminyl-tRNA synthetases. The reaction takes place in the presence of glutamine and ATP through an activated phospho-Asp-tRNA(Asn) or phospho-Glu-tRNA(Gln).</text>
</comment>
<comment type="catalytic activity">
    <reaction evidence="1">
        <text>L-glutamyl-tRNA(Gln) + L-glutamine + ATP + H2O = L-glutaminyl-tRNA(Gln) + L-glutamate + ADP + phosphate + H(+)</text>
        <dbReference type="Rhea" id="RHEA:17521"/>
        <dbReference type="Rhea" id="RHEA-COMP:9681"/>
        <dbReference type="Rhea" id="RHEA-COMP:9684"/>
        <dbReference type="ChEBI" id="CHEBI:15377"/>
        <dbReference type="ChEBI" id="CHEBI:15378"/>
        <dbReference type="ChEBI" id="CHEBI:29985"/>
        <dbReference type="ChEBI" id="CHEBI:30616"/>
        <dbReference type="ChEBI" id="CHEBI:43474"/>
        <dbReference type="ChEBI" id="CHEBI:58359"/>
        <dbReference type="ChEBI" id="CHEBI:78520"/>
        <dbReference type="ChEBI" id="CHEBI:78521"/>
        <dbReference type="ChEBI" id="CHEBI:456216"/>
    </reaction>
</comment>
<comment type="catalytic activity">
    <reaction evidence="1">
        <text>L-aspartyl-tRNA(Asn) + L-glutamine + ATP + H2O = L-asparaginyl-tRNA(Asn) + L-glutamate + ADP + phosphate + 2 H(+)</text>
        <dbReference type="Rhea" id="RHEA:14513"/>
        <dbReference type="Rhea" id="RHEA-COMP:9674"/>
        <dbReference type="Rhea" id="RHEA-COMP:9677"/>
        <dbReference type="ChEBI" id="CHEBI:15377"/>
        <dbReference type="ChEBI" id="CHEBI:15378"/>
        <dbReference type="ChEBI" id="CHEBI:29985"/>
        <dbReference type="ChEBI" id="CHEBI:30616"/>
        <dbReference type="ChEBI" id="CHEBI:43474"/>
        <dbReference type="ChEBI" id="CHEBI:58359"/>
        <dbReference type="ChEBI" id="CHEBI:78515"/>
        <dbReference type="ChEBI" id="CHEBI:78516"/>
        <dbReference type="ChEBI" id="CHEBI:456216"/>
    </reaction>
</comment>
<comment type="subunit">
    <text evidence="1">Heterotrimer of A, B and C subunits.</text>
</comment>
<comment type="similarity">
    <text evidence="1">Belongs to the GatB/GatE family. GatB subfamily.</text>
</comment>
<feature type="chain" id="PRO_1000122515" description="Aspartyl/glutamyl-tRNA(Asn/Gln) amidotransferase subunit B">
    <location>
        <begin position="1"/>
        <end position="476"/>
    </location>
</feature>
<protein>
    <recommendedName>
        <fullName evidence="1">Aspartyl/glutamyl-tRNA(Asn/Gln) amidotransferase subunit B</fullName>
        <shortName evidence="1">Asp/Glu-ADT subunit B</shortName>
        <ecNumber evidence="1">6.3.5.-</ecNumber>
    </recommendedName>
</protein>
<gene>
    <name evidence="1" type="primary">gatB</name>
    <name type="ordered locus">CLM_3699</name>
</gene>
<name>GATB_CLOBJ</name>
<evidence type="ECO:0000255" key="1">
    <source>
        <dbReference type="HAMAP-Rule" id="MF_00121"/>
    </source>
</evidence>
<proteinExistence type="inferred from homology"/>